<evidence type="ECO:0000255" key="1">
    <source>
        <dbReference type="HAMAP-Rule" id="MF_00372"/>
    </source>
</evidence>
<feature type="chain" id="PRO_1000079820" description="Imidazolonepropionase">
    <location>
        <begin position="1"/>
        <end position="405"/>
    </location>
</feature>
<feature type="binding site" evidence="1">
    <location>
        <position position="73"/>
    </location>
    <ligand>
        <name>Fe(3+)</name>
        <dbReference type="ChEBI" id="CHEBI:29034"/>
    </ligand>
</feature>
<feature type="binding site" evidence="1">
    <location>
        <position position="73"/>
    </location>
    <ligand>
        <name>Zn(2+)</name>
        <dbReference type="ChEBI" id="CHEBI:29105"/>
    </ligand>
</feature>
<feature type="binding site" evidence="1">
    <location>
        <position position="75"/>
    </location>
    <ligand>
        <name>Fe(3+)</name>
        <dbReference type="ChEBI" id="CHEBI:29034"/>
    </ligand>
</feature>
<feature type="binding site" evidence="1">
    <location>
        <position position="75"/>
    </location>
    <ligand>
        <name>Zn(2+)</name>
        <dbReference type="ChEBI" id="CHEBI:29105"/>
    </ligand>
</feature>
<feature type="binding site" evidence="1">
    <location>
        <position position="82"/>
    </location>
    <ligand>
        <name>4-imidazolone-5-propanoate</name>
        <dbReference type="ChEBI" id="CHEBI:77893"/>
    </ligand>
</feature>
<feature type="binding site" evidence="1">
    <location>
        <position position="145"/>
    </location>
    <ligand>
        <name>4-imidazolone-5-propanoate</name>
        <dbReference type="ChEBI" id="CHEBI:77893"/>
    </ligand>
</feature>
<feature type="binding site" evidence="1">
    <location>
        <position position="145"/>
    </location>
    <ligand>
        <name>N-formimidoyl-L-glutamate</name>
        <dbReference type="ChEBI" id="CHEBI:58928"/>
    </ligand>
</feature>
<feature type="binding site" evidence="1">
    <location>
        <position position="178"/>
    </location>
    <ligand>
        <name>4-imidazolone-5-propanoate</name>
        <dbReference type="ChEBI" id="CHEBI:77893"/>
    </ligand>
</feature>
<feature type="binding site" evidence="1">
    <location>
        <position position="243"/>
    </location>
    <ligand>
        <name>Fe(3+)</name>
        <dbReference type="ChEBI" id="CHEBI:29034"/>
    </ligand>
</feature>
<feature type="binding site" evidence="1">
    <location>
        <position position="243"/>
    </location>
    <ligand>
        <name>Zn(2+)</name>
        <dbReference type="ChEBI" id="CHEBI:29105"/>
    </ligand>
</feature>
<feature type="binding site" evidence="1">
    <location>
        <position position="246"/>
    </location>
    <ligand>
        <name>4-imidazolone-5-propanoate</name>
        <dbReference type="ChEBI" id="CHEBI:77893"/>
    </ligand>
</feature>
<feature type="binding site" evidence="1">
    <location>
        <position position="318"/>
    </location>
    <ligand>
        <name>Fe(3+)</name>
        <dbReference type="ChEBI" id="CHEBI:29034"/>
    </ligand>
</feature>
<feature type="binding site" evidence="1">
    <location>
        <position position="318"/>
    </location>
    <ligand>
        <name>Zn(2+)</name>
        <dbReference type="ChEBI" id="CHEBI:29105"/>
    </ligand>
</feature>
<feature type="binding site" evidence="1">
    <location>
        <position position="320"/>
    </location>
    <ligand>
        <name>N-formimidoyl-L-glutamate</name>
        <dbReference type="ChEBI" id="CHEBI:58928"/>
    </ligand>
</feature>
<feature type="binding site" evidence="1">
    <location>
        <position position="322"/>
    </location>
    <ligand>
        <name>N-formimidoyl-L-glutamate</name>
        <dbReference type="ChEBI" id="CHEBI:58928"/>
    </ligand>
</feature>
<feature type="binding site" evidence="1">
    <location>
        <position position="323"/>
    </location>
    <ligand>
        <name>4-imidazolone-5-propanoate</name>
        <dbReference type="ChEBI" id="CHEBI:77893"/>
    </ligand>
</feature>
<protein>
    <recommendedName>
        <fullName evidence="1">Imidazolonepropionase</fullName>
        <ecNumber evidence="1">3.5.2.7</ecNumber>
    </recommendedName>
    <alternativeName>
        <fullName evidence="1">Imidazolone-5-propionate hydrolase</fullName>
    </alternativeName>
</protein>
<name>HUTI_BRUSI</name>
<dbReference type="EC" id="3.5.2.7" evidence="1"/>
<dbReference type="EMBL" id="CP000912">
    <property type="protein sequence ID" value="ABY39878.1"/>
    <property type="molecule type" value="Genomic_DNA"/>
</dbReference>
<dbReference type="RefSeq" id="WP_004687091.1">
    <property type="nucleotide sequence ID" value="NC_010167.1"/>
</dbReference>
<dbReference type="SMR" id="A9WVU2"/>
<dbReference type="GeneID" id="45126239"/>
<dbReference type="KEGG" id="bmt:BSUIS_B0922"/>
<dbReference type="HOGENOM" id="CLU_041647_0_0_5"/>
<dbReference type="UniPathway" id="UPA00379">
    <property type="reaction ID" value="UER00551"/>
</dbReference>
<dbReference type="Proteomes" id="UP000008545">
    <property type="component" value="Chromosome II"/>
</dbReference>
<dbReference type="GO" id="GO:0005737">
    <property type="term" value="C:cytoplasm"/>
    <property type="evidence" value="ECO:0007669"/>
    <property type="project" value="UniProtKB-SubCell"/>
</dbReference>
<dbReference type="GO" id="GO:0050480">
    <property type="term" value="F:imidazolonepropionase activity"/>
    <property type="evidence" value="ECO:0007669"/>
    <property type="project" value="UniProtKB-UniRule"/>
</dbReference>
<dbReference type="GO" id="GO:0005506">
    <property type="term" value="F:iron ion binding"/>
    <property type="evidence" value="ECO:0007669"/>
    <property type="project" value="UniProtKB-UniRule"/>
</dbReference>
<dbReference type="GO" id="GO:0008270">
    <property type="term" value="F:zinc ion binding"/>
    <property type="evidence" value="ECO:0007669"/>
    <property type="project" value="UniProtKB-UniRule"/>
</dbReference>
<dbReference type="GO" id="GO:0019556">
    <property type="term" value="P:L-histidine catabolic process to glutamate and formamide"/>
    <property type="evidence" value="ECO:0007669"/>
    <property type="project" value="UniProtKB-UniPathway"/>
</dbReference>
<dbReference type="GO" id="GO:0019557">
    <property type="term" value="P:L-histidine catabolic process to glutamate and formate"/>
    <property type="evidence" value="ECO:0007669"/>
    <property type="project" value="UniProtKB-UniPathway"/>
</dbReference>
<dbReference type="CDD" id="cd01296">
    <property type="entry name" value="Imidazolone-5PH"/>
    <property type="match status" value="1"/>
</dbReference>
<dbReference type="FunFam" id="3.20.20.140:FF:000007">
    <property type="entry name" value="Imidazolonepropionase"/>
    <property type="match status" value="1"/>
</dbReference>
<dbReference type="Gene3D" id="3.20.20.140">
    <property type="entry name" value="Metal-dependent hydrolases"/>
    <property type="match status" value="1"/>
</dbReference>
<dbReference type="Gene3D" id="2.30.40.10">
    <property type="entry name" value="Urease, subunit C, domain 1"/>
    <property type="match status" value="1"/>
</dbReference>
<dbReference type="HAMAP" id="MF_00372">
    <property type="entry name" value="HutI"/>
    <property type="match status" value="1"/>
</dbReference>
<dbReference type="InterPro" id="IPR006680">
    <property type="entry name" value="Amidohydro-rel"/>
</dbReference>
<dbReference type="InterPro" id="IPR005920">
    <property type="entry name" value="HutI"/>
</dbReference>
<dbReference type="InterPro" id="IPR011059">
    <property type="entry name" value="Metal-dep_hydrolase_composite"/>
</dbReference>
<dbReference type="InterPro" id="IPR032466">
    <property type="entry name" value="Metal_Hydrolase"/>
</dbReference>
<dbReference type="NCBIfam" id="TIGR01224">
    <property type="entry name" value="hutI"/>
    <property type="match status" value="1"/>
</dbReference>
<dbReference type="PANTHER" id="PTHR42752">
    <property type="entry name" value="IMIDAZOLONEPROPIONASE"/>
    <property type="match status" value="1"/>
</dbReference>
<dbReference type="PANTHER" id="PTHR42752:SF1">
    <property type="entry name" value="IMIDAZOLONEPROPIONASE-RELATED"/>
    <property type="match status" value="1"/>
</dbReference>
<dbReference type="Pfam" id="PF01979">
    <property type="entry name" value="Amidohydro_1"/>
    <property type="match status" value="1"/>
</dbReference>
<dbReference type="SUPFAM" id="SSF51338">
    <property type="entry name" value="Composite domain of metallo-dependent hydrolases"/>
    <property type="match status" value="1"/>
</dbReference>
<dbReference type="SUPFAM" id="SSF51556">
    <property type="entry name" value="Metallo-dependent hydrolases"/>
    <property type="match status" value="1"/>
</dbReference>
<sequence length="405" mass="43462">MTKNSSTVFTHARIATLEEKAANLGLIEEAALVVKDARIVYAGPENKLPGEYASFEKIDCGNRLITPGLIDCHTHLVHAGNRAHEFELRLQGATYEEVARAGGGIVSSVRNLRAASEDDLVRETLPRLDALIAEGVTTVEVKSGYGLDRDSEIKSLKAARRLGEERDVAIRTTFLGAHALPPEMNGDKAAYIDRVINDMLPAIAEQGLADAVDGFCEGIAFLPDEIARVFDAAKAHDIPVKLHADQLSNLHGAALAASYGALSADHLEYTDADGAAAMASAGTVAVLLPGAYYFIRETQKPPVEAFRAAGTKMALATDNNPGTSPLTSLLLTMNMGATLFRMTVEECIAGVTREAARALGILDQTGTLEIGKDADLAIWDIERPAELVYRIGFNPLWKRVFKGQI</sequence>
<comment type="function">
    <text evidence="1">Catalyzes the hydrolytic cleavage of the carbon-nitrogen bond in imidazolone-5-propanoate to yield N-formimidoyl-L-glutamate. It is the third step in the universal histidine degradation pathway.</text>
</comment>
<comment type="catalytic activity">
    <reaction evidence="1">
        <text>4-imidazolone-5-propanoate + H2O = N-formimidoyl-L-glutamate</text>
        <dbReference type="Rhea" id="RHEA:23660"/>
        <dbReference type="ChEBI" id="CHEBI:15377"/>
        <dbReference type="ChEBI" id="CHEBI:58928"/>
        <dbReference type="ChEBI" id="CHEBI:77893"/>
        <dbReference type="EC" id="3.5.2.7"/>
    </reaction>
</comment>
<comment type="cofactor">
    <cofactor evidence="1">
        <name>Zn(2+)</name>
        <dbReference type="ChEBI" id="CHEBI:29105"/>
    </cofactor>
    <cofactor evidence="1">
        <name>Fe(3+)</name>
        <dbReference type="ChEBI" id="CHEBI:29034"/>
    </cofactor>
    <text evidence="1">Binds 1 zinc or iron ion per subunit.</text>
</comment>
<comment type="pathway">
    <text evidence="1">Amino-acid degradation; L-histidine degradation into L-glutamate; N-formimidoyl-L-glutamate from L-histidine: step 3/3.</text>
</comment>
<comment type="subcellular location">
    <subcellularLocation>
        <location evidence="1">Cytoplasm</location>
    </subcellularLocation>
</comment>
<comment type="similarity">
    <text evidence="1">Belongs to the metallo-dependent hydrolases superfamily. HutI family.</text>
</comment>
<accession>A9WVU2</accession>
<proteinExistence type="inferred from homology"/>
<gene>
    <name evidence="1" type="primary">hutI</name>
    <name type="ordered locus">BSUIS_B0922</name>
</gene>
<organism>
    <name type="scientific">Brucella suis (strain ATCC 23445 / NCTC 10510)</name>
    <dbReference type="NCBI Taxonomy" id="470137"/>
    <lineage>
        <taxon>Bacteria</taxon>
        <taxon>Pseudomonadati</taxon>
        <taxon>Pseudomonadota</taxon>
        <taxon>Alphaproteobacteria</taxon>
        <taxon>Hyphomicrobiales</taxon>
        <taxon>Brucellaceae</taxon>
        <taxon>Brucella/Ochrobactrum group</taxon>
        <taxon>Brucella</taxon>
    </lineage>
</organism>
<reference key="1">
    <citation type="submission" date="2007-12" db="EMBL/GenBank/DDBJ databases">
        <title>Brucella suis ATCC 23445 whole genome shotgun sequencing project.</title>
        <authorList>
            <person name="Setubal J.C."/>
            <person name="Bowns C."/>
            <person name="Boyle S."/>
            <person name="Crasta O.R."/>
            <person name="Czar M.J."/>
            <person name="Dharmanolla C."/>
            <person name="Gillespie J.J."/>
            <person name="Kenyon R.W."/>
            <person name="Lu J."/>
            <person name="Mane S."/>
            <person name="Mohapatra S."/>
            <person name="Nagrani S."/>
            <person name="Purkayastha A."/>
            <person name="Rajasimha H.K."/>
            <person name="Shallom J.M."/>
            <person name="Shallom S."/>
            <person name="Shukla M."/>
            <person name="Snyder E.E."/>
            <person name="Sobral B.W."/>
            <person name="Wattam A.R."/>
            <person name="Will R."/>
            <person name="Williams K."/>
            <person name="Yoo H."/>
            <person name="Bruce D."/>
            <person name="Detter C."/>
            <person name="Munk C."/>
            <person name="Brettin T.S."/>
        </authorList>
    </citation>
    <scope>NUCLEOTIDE SEQUENCE [LARGE SCALE GENOMIC DNA]</scope>
    <source>
        <strain>ATCC 23445 / NCTC 10510</strain>
    </source>
</reference>
<keyword id="KW-0963">Cytoplasm</keyword>
<keyword id="KW-0369">Histidine metabolism</keyword>
<keyword id="KW-0378">Hydrolase</keyword>
<keyword id="KW-0408">Iron</keyword>
<keyword id="KW-0479">Metal-binding</keyword>
<keyword id="KW-0862">Zinc</keyword>